<name>SYDND_PARXL</name>
<dbReference type="EC" id="6.1.1.23" evidence="1"/>
<dbReference type="EMBL" id="CP000270">
    <property type="protein sequence ID" value="ABE28956.1"/>
    <property type="molecule type" value="Genomic_DNA"/>
</dbReference>
<dbReference type="RefSeq" id="WP_011486782.1">
    <property type="nucleotide sequence ID" value="NC_007951.1"/>
</dbReference>
<dbReference type="SMR" id="Q145N3"/>
<dbReference type="STRING" id="266265.Bxe_A4043"/>
<dbReference type="KEGG" id="bxb:DR64_1720"/>
<dbReference type="KEGG" id="bxe:Bxe_A4043"/>
<dbReference type="PATRIC" id="fig|266265.5.peg.441"/>
<dbReference type="eggNOG" id="COG0173">
    <property type="taxonomic scope" value="Bacteria"/>
</dbReference>
<dbReference type="OrthoDB" id="9802326at2"/>
<dbReference type="Proteomes" id="UP000001817">
    <property type="component" value="Chromosome 1"/>
</dbReference>
<dbReference type="GO" id="GO:0005737">
    <property type="term" value="C:cytoplasm"/>
    <property type="evidence" value="ECO:0007669"/>
    <property type="project" value="UniProtKB-SubCell"/>
</dbReference>
<dbReference type="GO" id="GO:0004815">
    <property type="term" value="F:aspartate-tRNA ligase activity"/>
    <property type="evidence" value="ECO:0007669"/>
    <property type="project" value="UniProtKB-UniRule"/>
</dbReference>
<dbReference type="GO" id="GO:0050560">
    <property type="term" value="F:aspartate-tRNA(Asn) ligase activity"/>
    <property type="evidence" value="ECO:0007669"/>
    <property type="project" value="UniProtKB-EC"/>
</dbReference>
<dbReference type="GO" id="GO:0005524">
    <property type="term" value="F:ATP binding"/>
    <property type="evidence" value="ECO:0007669"/>
    <property type="project" value="UniProtKB-UniRule"/>
</dbReference>
<dbReference type="GO" id="GO:0003676">
    <property type="term" value="F:nucleic acid binding"/>
    <property type="evidence" value="ECO:0007669"/>
    <property type="project" value="InterPro"/>
</dbReference>
<dbReference type="GO" id="GO:0006422">
    <property type="term" value="P:aspartyl-tRNA aminoacylation"/>
    <property type="evidence" value="ECO:0007669"/>
    <property type="project" value="UniProtKB-UniRule"/>
</dbReference>
<dbReference type="CDD" id="cd00777">
    <property type="entry name" value="AspRS_core"/>
    <property type="match status" value="1"/>
</dbReference>
<dbReference type="CDD" id="cd04317">
    <property type="entry name" value="EcAspRS_like_N"/>
    <property type="match status" value="1"/>
</dbReference>
<dbReference type="Gene3D" id="3.30.930.10">
    <property type="entry name" value="Bira Bifunctional Protein, Domain 2"/>
    <property type="match status" value="1"/>
</dbReference>
<dbReference type="Gene3D" id="3.30.1360.30">
    <property type="entry name" value="GAD-like domain"/>
    <property type="match status" value="1"/>
</dbReference>
<dbReference type="Gene3D" id="2.40.50.140">
    <property type="entry name" value="Nucleic acid-binding proteins"/>
    <property type="match status" value="1"/>
</dbReference>
<dbReference type="HAMAP" id="MF_00044">
    <property type="entry name" value="Asp_tRNA_synth_type1"/>
    <property type="match status" value="1"/>
</dbReference>
<dbReference type="InterPro" id="IPR004364">
    <property type="entry name" value="Aa-tRNA-synt_II"/>
</dbReference>
<dbReference type="InterPro" id="IPR006195">
    <property type="entry name" value="aa-tRNA-synth_II"/>
</dbReference>
<dbReference type="InterPro" id="IPR045864">
    <property type="entry name" value="aa-tRNA-synth_II/BPL/LPL"/>
</dbReference>
<dbReference type="InterPro" id="IPR004524">
    <property type="entry name" value="Asp-tRNA-ligase_1"/>
</dbReference>
<dbReference type="InterPro" id="IPR047089">
    <property type="entry name" value="Asp-tRNA-ligase_1_N"/>
</dbReference>
<dbReference type="InterPro" id="IPR002312">
    <property type="entry name" value="Asp/Asn-tRNA-synth_IIb"/>
</dbReference>
<dbReference type="InterPro" id="IPR047090">
    <property type="entry name" value="AspRS_core"/>
</dbReference>
<dbReference type="InterPro" id="IPR004115">
    <property type="entry name" value="GAD-like_sf"/>
</dbReference>
<dbReference type="InterPro" id="IPR029351">
    <property type="entry name" value="GAD_dom"/>
</dbReference>
<dbReference type="InterPro" id="IPR012340">
    <property type="entry name" value="NA-bd_OB-fold"/>
</dbReference>
<dbReference type="InterPro" id="IPR004365">
    <property type="entry name" value="NA-bd_OB_tRNA"/>
</dbReference>
<dbReference type="NCBIfam" id="TIGR00459">
    <property type="entry name" value="aspS_bact"/>
    <property type="match status" value="1"/>
</dbReference>
<dbReference type="NCBIfam" id="NF001750">
    <property type="entry name" value="PRK00476.1"/>
    <property type="match status" value="1"/>
</dbReference>
<dbReference type="PANTHER" id="PTHR22594:SF5">
    <property type="entry name" value="ASPARTATE--TRNA LIGASE, MITOCHONDRIAL"/>
    <property type="match status" value="1"/>
</dbReference>
<dbReference type="PANTHER" id="PTHR22594">
    <property type="entry name" value="ASPARTYL/LYSYL-TRNA SYNTHETASE"/>
    <property type="match status" value="1"/>
</dbReference>
<dbReference type="Pfam" id="PF02938">
    <property type="entry name" value="GAD"/>
    <property type="match status" value="1"/>
</dbReference>
<dbReference type="Pfam" id="PF00152">
    <property type="entry name" value="tRNA-synt_2"/>
    <property type="match status" value="1"/>
</dbReference>
<dbReference type="Pfam" id="PF01336">
    <property type="entry name" value="tRNA_anti-codon"/>
    <property type="match status" value="1"/>
</dbReference>
<dbReference type="PRINTS" id="PR01042">
    <property type="entry name" value="TRNASYNTHASP"/>
</dbReference>
<dbReference type="SUPFAM" id="SSF55681">
    <property type="entry name" value="Class II aaRS and biotin synthetases"/>
    <property type="match status" value="1"/>
</dbReference>
<dbReference type="SUPFAM" id="SSF55261">
    <property type="entry name" value="GAD domain-like"/>
    <property type="match status" value="1"/>
</dbReference>
<dbReference type="SUPFAM" id="SSF50249">
    <property type="entry name" value="Nucleic acid-binding proteins"/>
    <property type="match status" value="1"/>
</dbReference>
<dbReference type="PROSITE" id="PS50862">
    <property type="entry name" value="AA_TRNA_LIGASE_II"/>
    <property type="match status" value="1"/>
</dbReference>
<feature type="chain" id="PRO_1000006653" description="Aspartate--tRNA(Asp/Asn) ligase">
    <location>
        <begin position="1"/>
        <end position="599"/>
    </location>
</feature>
<feature type="region of interest" description="Aspartate" evidence="1">
    <location>
        <begin position="198"/>
        <end position="201"/>
    </location>
</feature>
<feature type="binding site" evidence="1">
    <location>
        <position position="174"/>
    </location>
    <ligand>
        <name>L-aspartate</name>
        <dbReference type="ChEBI" id="CHEBI:29991"/>
    </ligand>
</feature>
<feature type="binding site" evidence="1">
    <location>
        <begin position="220"/>
        <end position="222"/>
    </location>
    <ligand>
        <name>ATP</name>
        <dbReference type="ChEBI" id="CHEBI:30616"/>
    </ligand>
</feature>
<feature type="binding site" evidence="1">
    <location>
        <position position="220"/>
    </location>
    <ligand>
        <name>L-aspartate</name>
        <dbReference type="ChEBI" id="CHEBI:29991"/>
    </ligand>
</feature>
<feature type="binding site" evidence="1">
    <location>
        <position position="229"/>
    </location>
    <ligand>
        <name>ATP</name>
        <dbReference type="ChEBI" id="CHEBI:30616"/>
    </ligand>
</feature>
<feature type="binding site" evidence="1">
    <location>
        <position position="457"/>
    </location>
    <ligand>
        <name>L-aspartate</name>
        <dbReference type="ChEBI" id="CHEBI:29991"/>
    </ligand>
</feature>
<feature type="binding site" evidence="1">
    <location>
        <position position="491"/>
    </location>
    <ligand>
        <name>ATP</name>
        <dbReference type="ChEBI" id="CHEBI:30616"/>
    </ligand>
</feature>
<feature type="binding site" evidence="1">
    <location>
        <position position="498"/>
    </location>
    <ligand>
        <name>L-aspartate</name>
        <dbReference type="ChEBI" id="CHEBI:29991"/>
    </ligand>
</feature>
<feature type="binding site" evidence="1">
    <location>
        <begin position="543"/>
        <end position="546"/>
    </location>
    <ligand>
        <name>ATP</name>
        <dbReference type="ChEBI" id="CHEBI:30616"/>
    </ligand>
</feature>
<feature type="site" description="Important for tRNA non-discrimination" evidence="1">
    <location>
        <position position="32"/>
    </location>
</feature>
<feature type="site" description="Important for tRNA non-discrimination" evidence="1">
    <location>
        <position position="83"/>
    </location>
</feature>
<reference key="1">
    <citation type="journal article" date="2006" name="Proc. Natl. Acad. Sci. U.S.A.">
        <title>Burkholderia xenovorans LB400 harbors a multi-replicon, 9.73-Mbp genome shaped for versatility.</title>
        <authorList>
            <person name="Chain P.S.G."/>
            <person name="Denef V.J."/>
            <person name="Konstantinidis K.T."/>
            <person name="Vergez L.M."/>
            <person name="Agullo L."/>
            <person name="Reyes V.L."/>
            <person name="Hauser L."/>
            <person name="Cordova M."/>
            <person name="Gomez L."/>
            <person name="Gonzalez M."/>
            <person name="Land M."/>
            <person name="Lao V."/>
            <person name="Larimer F."/>
            <person name="LiPuma J.J."/>
            <person name="Mahenthiralingam E."/>
            <person name="Malfatti S.A."/>
            <person name="Marx C.J."/>
            <person name="Parnell J.J."/>
            <person name="Ramette A."/>
            <person name="Richardson P."/>
            <person name="Seeger M."/>
            <person name="Smith D."/>
            <person name="Spilker T."/>
            <person name="Sul W.J."/>
            <person name="Tsoi T.V."/>
            <person name="Ulrich L.E."/>
            <person name="Zhulin I.B."/>
            <person name="Tiedje J.M."/>
        </authorList>
    </citation>
    <scope>NUCLEOTIDE SEQUENCE [LARGE SCALE GENOMIC DNA]</scope>
    <source>
        <strain>LB400</strain>
    </source>
</reference>
<sequence length="599" mass="67881">MSMRSEYCGLVTEELLGQSVSLCGWVSRRRDHGGVIFIDLRDREGLVQVVCDPDRAEMFKAAEGVRNEFCLQIKGVVRARPEGTTNAALKSGKIEVLCHELIVLNPSITPPFQLDDDNLSETTRLTHRVLDLRRPQMQHNLRLRYRVAIEVRKYLDAQGFIDIETPMLTKSTPEGARDYLVPSRTNPGQFFALPQSPQLFKQLLMVANFDRYYQIVKCFRDEDLRADRQPEFTQIDCETSFLSEQEIRDLFEAMIRHVFKETIGVTLDEKFPVMLYSEAMRRFGSDKPDLRVKLEFTDLTDAVRDVDFKVFSTPANTKDGRVAAIRVPKGGELSRGDIDSYTEFVRIYGAKGLAWIKVNEVAKGRDGLQSPIVKNLHDEAVKAIIERTGAQDGDIIFFAADRAKVVNDSLGALRLKIGHSEFGKANGLVESGWKPLWVIDFPMFEYDEEDNRYVAAHHPFTSPKDEHLEYLETDPARCLAKAYDMVLNGWEIGGGSVRIHREEVQSKVFRALKINAEEAQAKFGFLLDALQYGAPPHGGIAFGLDRIVTMMAGADSIRDVIAFPKTQRAQCLLTQAPSEVDERQLRELHIRLRQPEPKA</sequence>
<comment type="function">
    <text evidence="1">Aspartyl-tRNA synthetase with relaxed tRNA specificity since it is able to aspartylate not only its cognate tRNA(Asp) but also tRNA(Asn). Reaction proceeds in two steps: L-aspartate is first activated by ATP to form Asp-AMP and then transferred to the acceptor end of tRNA(Asp/Asn).</text>
</comment>
<comment type="catalytic activity">
    <reaction evidence="1">
        <text>tRNA(Asx) + L-aspartate + ATP = L-aspartyl-tRNA(Asx) + AMP + diphosphate</text>
        <dbReference type="Rhea" id="RHEA:18349"/>
        <dbReference type="Rhea" id="RHEA-COMP:9710"/>
        <dbReference type="Rhea" id="RHEA-COMP:9711"/>
        <dbReference type="ChEBI" id="CHEBI:29991"/>
        <dbReference type="ChEBI" id="CHEBI:30616"/>
        <dbReference type="ChEBI" id="CHEBI:33019"/>
        <dbReference type="ChEBI" id="CHEBI:78442"/>
        <dbReference type="ChEBI" id="CHEBI:78516"/>
        <dbReference type="ChEBI" id="CHEBI:456215"/>
        <dbReference type="EC" id="6.1.1.23"/>
    </reaction>
</comment>
<comment type="subunit">
    <text evidence="1">Homodimer.</text>
</comment>
<comment type="subcellular location">
    <subcellularLocation>
        <location evidence="1">Cytoplasm</location>
    </subcellularLocation>
</comment>
<comment type="similarity">
    <text evidence="1">Belongs to the class-II aminoacyl-tRNA synthetase family. Type 1 subfamily.</text>
</comment>
<evidence type="ECO:0000255" key="1">
    <source>
        <dbReference type="HAMAP-Rule" id="MF_00044"/>
    </source>
</evidence>
<proteinExistence type="inferred from homology"/>
<gene>
    <name evidence="1" type="primary">aspS</name>
    <name type="ordered locus">Bxeno_A0418</name>
    <name type="ORF">Bxe_A4043</name>
</gene>
<protein>
    <recommendedName>
        <fullName evidence="1">Aspartate--tRNA(Asp/Asn) ligase</fullName>
        <ecNumber evidence="1">6.1.1.23</ecNumber>
    </recommendedName>
    <alternativeName>
        <fullName evidence="1">Aspartyl-tRNA synthetase</fullName>
        <shortName evidence="1">AspRS</shortName>
    </alternativeName>
    <alternativeName>
        <fullName evidence="1">Non-discriminating aspartyl-tRNA synthetase</fullName>
        <shortName evidence="1">ND-AspRS</shortName>
    </alternativeName>
</protein>
<keyword id="KW-0030">Aminoacyl-tRNA synthetase</keyword>
<keyword id="KW-0067">ATP-binding</keyword>
<keyword id="KW-0963">Cytoplasm</keyword>
<keyword id="KW-0436">Ligase</keyword>
<keyword id="KW-0547">Nucleotide-binding</keyword>
<keyword id="KW-0648">Protein biosynthesis</keyword>
<keyword id="KW-1185">Reference proteome</keyword>
<accession>Q145N3</accession>
<organism>
    <name type="scientific">Paraburkholderia xenovorans (strain LB400)</name>
    <dbReference type="NCBI Taxonomy" id="266265"/>
    <lineage>
        <taxon>Bacteria</taxon>
        <taxon>Pseudomonadati</taxon>
        <taxon>Pseudomonadota</taxon>
        <taxon>Betaproteobacteria</taxon>
        <taxon>Burkholderiales</taxon>
        <taxon>Burkholderiaceae</taxon>
        <taxon>Paraburkholderia</taxon>
    </lineage>
</organism>